<comment type="subunit">
    <text evidence="1">Part of the 50S ribosomal subunit. Contacts protein L32.</text>
</comment>
<comment type="similarity">
    <text evidence="1">Belongs to the bacterial ribosomal protein bL17 family.</text>
</comment>
<keyword id="KW-1185">Reference proteome</keyword>
<keyword id="KW-0687">Ribonucleoprotein</keyword>
<keyword id="KW-0689">Ribosomal protein</keyword>
<reference key="1">
    <citation type="journal article" date="2008" name="PLoS Genet.">
        <title>Complete genome sequence of the complex carbohydrate-degrading marine bacterium, Saccharophagus degradans strain 2-40 T.</title>
        <authorList>
            <person name="Weiner R.M."/>
            <person name="Taylor L.E. II"/>
            <person name="Henrissat B."/>
            <person name="Hauser L."/>
            <person name="Land M."/>
            <person name="Coutinho P.M."/>
            <person name="Rancurel C."/>
            <person name="Saunders E.H."/>
            <person name="Longmire A.G."/>
            <person name="Zhang H."/>
            <person name="Bayer E.A."/>
            <person name="Gilbert H.J."/>
            <person name="Larimer F."/>
            <person name="Zhulin I.B."/>
            <person name="Ekborg N.A."/>
            <person name="Lamed R."/>
            <person name="Richardson P.M."/>
            <person name="Borovok I."/>
            <person name="Hutcheson S."/>
        </authorList>
    </citation>
    <scope>NUCLEOTIDE SEQUENCE [LARGE SCALE GENOMIC DNA]</scope>
    <source>
        <strain>2-40 / ATCC 43961 / DSM 17024</strain>
    </source>
</reference>
<protein>
    <recommendedName>
        <fullName evidence="1">Large ribosomal subunit protein bL17</fullName>
    </recommendedName>
    <alternativeName>
        <fullName evidence="2">50S ribosomal protein L17</fullName>
    </alternativeName>
</protein>
<dbReference type="EMBL" id="CP000282">
    <property type="protein sequence ID" value="ABD80247.1"/>
    <property type="molecule type" value="Genomic_DNA"/>
</dbReference>
<dbReference type="RefSeq" id="WP_011467467.1">
    <property type="nucleotide sequence ID" value="NC_007912.1"/>
</dbReference>
<dbReference type="SMR" id="Q21M32"/>
<dbReference type="STRING" id="203122.Sde_0985"/>
<dbReference type="GeneID" id="98612669"/>
<dbReference type="KEGG" id="sde:Sde_0985"/>
<dbReference type="eggNOG" id="COG0203">
    <property type="taxonomic scope" value="Bacteria"/>
</dbReference>
<dbReference type="HOGENOM" id="CLU_074407_2_0_6"/>
<dbReference type="OrthoDB" id="9809073at2"/>
<dbReference type="Proteomes" id="UP000001947">
    <property type="component" value="Chromosome"/>
</dbReference>
<dbReference type="GO" id="GO:0022625">
    <property type="term" value="C:cytosolic large ribosomal subunit"/>
    <property type="evidence" value="ECO:0007669"/>
    <property type="project" value="TreeGrafter"/>
</dbReference>
<dbReference type="GO" id="GO:0003735">
    <property type="term" value="F:structural constituent of ribosome"/>
    <property type="evidence" value="ECO:0007669"/>
    <property type="project" value="InterPro"/>
</dbReference>
<dbReference type="GO" id="GO:0006412">
    <property type="term" value="P:translation"/>
    <property type="evidence" value="ECO:0007669"/>
    <property type="project" value="UniProtKB-UniRule"/>
</dbReference>
<dbReference type="FunFam" id="3.90.1030.10:FF:000001">
    <property type="entry name" value="50S ribosomal protein L17"/>
    <property type="match status" value="1"/>
</dbReference>
<dbReference type="Gene3D" id="3.90.1030.10">
    <property type="entry name" value="Ribosomal protein L17"/>
    <property type="match status" value="1"/>
</dbReference>
<dbReference type="HAMAP" id="MF_01368">
    <property type="entry name" value="Ribosomal_bL17"/>
    <property type="match status" value="1"/>
</dbReference>
<dbReference type="InterPro" id="IPR000456">
    <property type="entry name" value="Ribosomal_bL17"/>
</dbReference>
<dbReference type="InterPro" id="IPR047859">
    <property type="entry name" value="Ribosomal_bL17_CS"/>
</dbReference>
<dbReference type="InterPro" id="IPR036373">
    <property type="entry name" value="Ribosomal_bL17_sf"/>
</dbReference>
<dbReference type="NCBIfam" id="TIGR00059">
    <property type="entry name" value="L17"/>
    <property type="match status" value="1"/>
</dbReference>
<dbReference type="PANTHER" id="PTHR14413:SF16">
    <property type="entry name" value="LARGE RIBOSOMAL SUBUNIT PROTEIN BL17M"/>
    <property type="match status" value="1"/>
</dbReference>
<dbReference type="PANTHER" id="PTHR14413">
    <property type="entry name" value="RIBOSOMAL PROTEIN L17"/>
    <property type="match status" value="1"/>
</dbReference>
<dbReference type="Pfam" id="PF01196">
    <property type="entry name" value="Ribosomal_L17"/>
    <property type="match status" value="1"/>
</dbReference>
<dbReference type="SUPFAM" id="SSF64263">
    <property type="entry name" value="Prokaryotic ribosomal protein L17"/>
    <property type="match status" value="1"/>
</dbReference>
<dbReference type="PROSITE" id="PS01167">
    <property type="entry name" value="RIBOSOMAL_L17"/>
    <property type="match status" value="1"/>
</dbReference>
<sequence length="132" mass="14863">MRHRHSGRQLNRNSSHRKAMFKNMVTSLVEHELIKTTLPKAKELRRYAEPLITLSKSDSVANRRLAFARLGNKATVGKLFNELGPRYEGRPGGYLRIMKCGFRAGDKAPMAYVELVDRPAPVAAEPVESSED</sequence>
<proteinExistence type="inferred from homology"/>
<name>RL17_SACD2</name>
<evidence type="ECO:0000255" key="1">
    <source>
        <dbReference type="HAMAP-Rule" id="MF_01368"/>
    </source>
</evidence>
<evidence type="ECO:0000305" key="2"/>
<feature type="chain" id="PRO_0000267935" description="Large ribosomal subunit protein bL17">
    <location>
        <begin position="1"/>
        <end position="132"/>
    </location>
</feature>
<organism>
    <name type="scientific">Saccharophagus degradans (strain 2-40 / ATCC 43961 / DSM 17024)</name>
    <dbReference type="NCBI Taxonomy" id="203122"/>
    <lineage>
        <taxon>Bacteria</taxon>
        <taxon>Pseudomonadati</taxon>
        <taxon>Pseudomonadota</taxon>
        <taxon>Gammaproteobacteria</taxon>
        <taxon>Cellvibrionales</taxon>
        <taxon>Cellvibrionaceae</taxon>
        <taxon>Saccharophagus</taxon>
    </lineage>
</organism>
<accession>Q21M32</accession>
<gene>
    <name evidence="1" type="primary">rplQ</name>
    <name type="ordered locus">Sde_0985</name>
</gene>